<gene>
    <name evidence="8" type="primary">Rab9a</name>
    <name type="synonym">Rab9</name>
    <name type="synonym">Sid99</name>
</gene>
<evidence type="ECO:0000250" key="1"/>
<evidence type="ECO:0000250" key="2">
    <source>
        <dbReference type="UniProtKB" id="P51151"/>
    </source>
</evidence>
<evidence type="ECO:0000250" key="3">
    <source>
        <dbReference type="UniProtKB" id="P62820"/>
    </source>
</evidence>
<evidence type="ECO:0000269" key="4">
    <source>
    </source>
</evidence>
<evidence type="ECO:0000269" key="5">
    <source>
    </source>
</evidence>
<evidence type="ECO:0000269" key="6">
    <source>
    </source>
</evidence>
<evidence type="ECO:0000305" key="7"/>
<evidence type="ECO:0000312" key="8">
    <source>
        <dbReference type="MGI" id="MGI:1890695"/>
    </source>
</evidence>
<evidence type="ECO:0007744" key="9">
    <source>
        <dbReference type="PDB" id="4QXA"/>
    </source>
</evidence>
<evidence type="ECO:0007744" key="10">
    <source>
    </source>
</evidence>
<evidence type="ECO:0007829" key="11">
    <source>
        <dbReference type="PDB" id="1YZL"/>
    </source>
</evidence>
<evidence type="ECO:0007829" key="12">
    <source>
        <dbReference type="PDB" id="4QXA"/>
    </source>
</evidence>
<protein>
    <recommendedName>
        <fullName>Ras-related protein Rab-9A</fullName>
        <ecNumber evidence="3">3.6.5.2</ecNumber>
    </recommendedName>
    <alternativeName>
        <fullName>Sid 99</fullName>
    </alternativeName>
</protein>
<feature type="initiator methionine" description="Removed" evidence="2">
    <location>
        <position position="1"/>
    </location>
</feature>
<feature type="chain" id="PRO_0000121140" description="Ras-related protein Rab-9A">
    <location>
        <begin position="2"/>
        <end position="201"/>
    </location>
</feature>
<feature type="short sequence motif" description="Switch 1" evidence="2">
    <location>
        <begin position="31"/>
        <end position="42"/>
    </location>
</feature>
<feature type="short sequence motif" description="Switch 2" evidence="2">
    <location>
        <begin position="64"/>
        <end position="78"/>
    </location>
</feature>
<feature type="binding site" evidence="5 9">
    <location>
        <position position="17"/>
    </location>
    <ligand>
        <name>GTP</name>
        <dbReference type="ChEBI" id="CHEBI:37565"/>
    </ligand>
</feature>
<feature type="binding site" evidence="2">
    <location>
        <position position="18"/>
    </location>
    <ligand>
        <name>GTP</name>
        <dbReference type="ChEBI" id="CHEBI:37565"/>
    </ligand>
</feature>
<feature type="binding site" evidence="5 9">
    <location>
        <position position="19"/>
    </location>
    <ligand>
        <name>GTP</name>
        <dbReference type="ChEBI" id="CHEBI:37565"/>
    </ligand>
</feature>
<feature type="binding site" evidence="5 9">
    <location>
        <position position="20"/>
    </location>
    <ligand>
        <name>GTP</name>
        <dbReference type="ChEBI" id="CHEBI:37565"/>
    </ligand>
</feature>
<feature type="binding site" evidence="5 9">
    <location>
        <position position="21"/>
    </location>
    <ligand>
        <name>GTP</name>
        <dbReference type="ChEBI" id="CHEBI:37565"/>
    </ligand>
</feature>
<feature type="binding site" evidence="5 9">
    <location>
        <position position="21"/>
    </location>
    <ligand>
        <name>Mg(2+)</name>
        <dbReference type="ChEBI" id="CHEBI:18420"/>
    </ligand>
</feature>
<feature type="binding site" evidence="5 9">
    <location>
        <position position="22"/>
    </location>
    <ligand>
        <name>GTP</name>
        <dbReference type="ChEBI" id="CHEBI:37565"/>
    </ligand>
</feature>
<feature type="binding site" evidence="5 9">
    <location>
        <position position="33"/>
    </location>
    <ligand>
        <name>GTP</name>
        <dbReference type="ChEBI" id="CHEBI:37565"/>
    </ligand>
</feature>
<feature type="binding site" evidence="5 9">
    <location>
        <position position="34"/>
    </location>
    <ligand>
        <name>GTP</name>
        <dbReference type="ChEBI" id="CHEBI:37565"/>
    </ligand>
</feature>
<feature type="binding site" evidence="5 9">
    <location>
        <position position="38"/>
    </location>
    <ligand>
        <name>GTP</name>
        <dbReference type="ChEBI" id="CHEBI:37565"/>
    </ligand>
</feature>
<feature type="binding site" evidence="5 9">
    <location>
        <position position="39"/>
    </location>
    <ligand>
        <name>GTP</name>
        <dbReference type="ChEBI" id="CHEBI:37565"/>
    </ligand>
</feature>
<feature type="binding site" evidence="5 9">
    <location>
        <position position="39"/>
    </location>
    <ligand>
        <name>Mg(2+)</name>
        <dbReference type="ChEBI" id="CHEBI:18420"/>
    </ligand>
</feature>
<feature type="binding site" evidence="2">
    <location>
        <position position="62"/>
    </location>
    <ligand>
        <name>Mg(2+)</name>
        <dbReference type="ChEBI" id="CHEBI:18420"/>
    </ligand>
</feature>
<feature type="binding site" evidence="5 9">
    <location>
        <position position="65"/>
    </location>
    <ligand>
        <name>GTP</name>
        <dbReference type="ChEBI" id="CHEBI:37565"/>
    </ligand>
</feature>
<feature type="binding site" evidence="5 9">
    <location>
        <position position="124"/>
    </location>
    <ligand>
        <name>GTP</name>
        <dbReference type="ChEBI" id="CHEBI:37565"/>
    </ligand>
</feature>
<feature type="binding site" evidence="5 9">
    <location>
        <position position="125"/>
    </location>
    <ligand>
        <name>GTP</name>
        <dbReference type="ChEBI" id="CHEBI:37565"/>
    </ligand>
</feature>
<feature type="binding site" evidence="5 9">
    <location>
        <position position="127"/>
    </location>
    <ligand>
        <name>GTP</name>
        <dbReference type="ChEBI" id="CHEBI:37565"/>
    </ligand>
</feature>
<feature type="binding site" evidence="5 9">
    <location>
        <position position="155"/>
    </location>
    <ligand>
        <name>GTP</name>
        <dbReference type="ChEBI" id="CHEBI:37565"/>
    </ligand>
</feature>
<feature type="binding site" evidence="2">
    <location>
        <position position="156"/>
    </location>
    <ligand>
        <name>GTP</name>
        <dbReference type="ChEBI" id="CHEBI:37565"/>
    </ligand>
</feature>
<feature type="modified residue" description="N-acetylalanine" evidence="2">
    <location>
        <position position="2"/>
    </location>
</feature>
<feature type="modified residue" description="Phosphoserine" evidence="10">
    <location>
        <position position="34"/>
    </location>
</feature>
<feature type="modified residue" description="Phosphoserine" evidence="2">
    <location>
        <position position="179"/>
    </location>
</feature>
<feature type="modified residue" description="Phosphothreonine" evidence="2">
    <location>
        <position position="187"/>
    </location>
</feature>
<feature type="lipid moiety-binding region" description="S-geranylgeranyl cysteine" evidence="1">
    <location>
        <position position="200"/>
    </location>
</feature>
<feature type="lipid moiety-binding region" description="S-geranylgeranyl cysteine" evidence="1">
    <location>
        <position position="201"/>
    </location>
</feature>
<feature type="strand" evidence="11">
    <location>
        <begin position="6"/>
        <end position="13"/>
    </location>
</feature>
<feature type="helix" evidence="11">
    <location>
        <begin position="20"/>
        <end position="29"/>
    </location>
</feature>
<feature type="strand" evidence="11">
    <location>
        <begin position="43"/>
        <end position="62"/>
    </location>
</feature>
<feature type="helix" evidence="11">
    <location>
        <begin position="67"/>
        <end position="69"/>
    </location>
</feature>
<feature type="helix" evidence="11">
    <location>
        <begin position="70"/>
        <end position="73"/>
    </location>
</feature>
<feature type="helix" evidence="11">
    <location>
        <begin position="74"/>
        <end position="76"/>
    </location>
</feature>
<feature type="turn" evidence="12">
    <location>
        <begin position="77"/>
        <end position="79"/>
    </location>
</feature>
<feature type="strand" evidence="11">
    <location>
        <begin position="81"/>
        <end position="88"/>
    </location>
</feature>
<feature type="helix" evidence="11">
    <location>
        <begin position="92"/>
        <end position="96"/>
    </location>
</feature>
<feature type="helix" evidence="11">
    <location>
        <begin position="98"/>
        <end position="109"/>
    </location>
</feature>
<feature type="helix" evidence="11">
    <location>
        <begin position="114"/>
        <end position="116"/>
    </location>
</feature>
<feature type="strand" evidence="11">
    <location>
        <begin position="119"/>
        <end position="124"/>
    </location>
</feature>
<feature type="helix" evidence="11">
    <location>
        <begin position="135"/>
        <end position="144"/>
    </location>
</feature>
<feature type="strand" evidence="11">
    <location>
        <begin position="150"/>
        <end position="152"/>
    </location>
</feature>
<feature type="turn" evidence="11">
    <location>
        <begin position="155"/>
        <end position="157"/>
    </location>
</feature>
<feature type="helix" evidence="11">
    <location>
        <begin position="161"/>
        <end position="173"/>
    </location>
</feature>
<sequence>MAGKSSLFKIILLGDGGVGKSSLMNRYVTNKFDSQLFHTIGVEFLNKDLEVDGHFVTMQIWDTAGQERFRSLRTPFYRGSDCCLLTFSVDDSQSFQNLSNWKKEFIYYADVKEPESFPFVILGNKTDIKERQVSTEEAQAWCKDNGDYPYFETSAKDSTNVAAAFEEAVRRILATEDRSEHLIQTDTVNLHRKPKPNSSCC</sequence>
<accession>Q9R0M6</accession>
<dbReference type="EC" id="3.6.5.2" evidence="3"/>
<dbReference type="EMBL" id="AB027290">
    <property type="protein sequence ID" value="BAA84709.1"/>
    <property type="molecule type" value="mRNA"/>
</dbReference>
<dbReference type="EMBL" id="AK010710">
    <property type="protein sequence ID" value="BAB27135.1"/>
    <property type="molecule type" value="mRNA"/>
</dbReference>
<dbReference type="EMBL" id="AK017301">
    <property type="protein sequence ID" value="BAB30681.1"/>
    <property type="molecule type" value="mRNA"/>
</dbReference>
<dbReference type="EMBL" id="AK032133">
    <property type="protein sequence ID" value="BAC27720.1"/>
    <property type="molecule type" value="mRNA"/>
</dbReference>
<dbReference type="EMBL" id="BC008160">
    <property type="protein sequence ID" value="AAH08160.1"/>
    <property type="molecule type" value="mRNA"/>
</dbReference>
<dbReference type="CCDS" id="CCDS30527.1"/>
<dbReference type="RefSeq" id="NP_062747.1">
    <property type="nucleotide sequence ID" value="NM_019773.2"/>
</dbReference>
<dbReference type="RefSeq" id="XP_006528985.1">
    <property type="nucleotide sequence ID" value="XM_006528922.1"/>
</dbReference>
<dbReference type="PDB" id="1YZL">
    <property type="method" value="X-ray"/>
    <property type="resolution" value="1.85 A"/>
    <property type="chains" value="A=2-175"/>
</dbReference>
<dbReference type="PDB" id="4QXA">
    <property type="method" value="X-ray"/>
    <property type="resolution" value="2.30 A"/>
    <property type="chains" value="A=1-199"/>
</dbReference>
<dbReference type="PDBsum" id="1YZL"/>
<dbReference type="PDBsum" id="4QXA"/>
<dbReference type="SMR" id="Q9R0M6"/>
<dbReference type="BioGRID" id="207943">
    <property type="interactions" value="2"/>
</dbReference>
<dbReference type="DIP" id="DIP-61068N"/>
<dbReference type="FunCoup" id="Q9R0M6">
    <property type="interactions" value="1047"/>
</dbReference>
<dbReference type="IntAct" id="Q9R0M6">
    <property type="interactions" value="4"/>
</dbReference>
<dbReference type="MINT" id="Q9R0M6"/>
<dbReference type="STRING" id="10090.ENSMUSP00000123325"/>
<dbReference type="iPTMnet" id="Q9R0M6"/>
<dbReference type="PhosphoSitePlus" id="Q9R0M6"/>
<dbReference type="SwissPalm" id="Q9R0M6"/>
<dbReference type="jPOST" id="Q9R0M6"/>
<dbReference type="PaxDb" id="10090-ENSMUSP00000123325"/>
<dbReference type="ProteomicsDB" id="300291"/>
<dbReference type="Pumba" id="Q9R0M6"/>
<dbReference type="ABCD" id="Q9R0M6">
    <property type="antibodies" value="22 sequenced antibodies"/>
</dbReference>
<dbReference type="Antibodypedia" id="513">
    <property type="antibodies" value="293 antibodies from 35 providers"/>
</dbReference>
<dbReference type="DNASU" id="56382"/>
<dbReference type="Ensembl" id="ENSMUST00000112091.9">
    <property type="protein sequence ID" value="ENSMUSP00000123325.2"/>
    <property type="gene ID" value="ENSMUSG00000079316.11"/>
</dbReference>
<dbReference type="GeneID" id="56382"/>
<dbReference type="KEGG" id="mmu:56382"/>
<dbReference type="UCSC" id="uc009uwu.2">
    <property type="organism name" value="mouse"/>
</dbReference>
<dbReference type="AGR" id="MGI:1890695"/>
<dbReference type="CTD" id="56382"/>
<dbReference type="MGI" id="MGI:1890695">
    <property type="gene designation" value="Rab9"/>
</dbReference>
<dbReference type="VEuPathDB" id="HostDB:ENSMUSG00000079316"/>
<dbReference type="eggNOG" id="KOG0394">
    <property type="taxonomic scope" value="Eukaryota"/>
</dbReference>
<dbReference type="GeneTree" id="ENSGT00940000158619"/>
<dbReference type="InParanoid" id="Q9R0M6"/>
<dbReference type="OMA" id="WCAEQKV"/>
<dbReference type="OrthoDB" id="1436450at2759"/>
<dbReference type="PhylomeDB" id="Q9R0M6"/>
<dbReference type="TreeFam" id="TF326442"/>
<dbReference type="Reactome" id="R-MMU-6811440">
    <property type="pathway name" value="Retrograde transport at the Trans-Golgi-Network"/>
</dbReference>
<dbReference type="Reactome" id="R-MMU-8873719">
    <property type="pathway name" value="RAB geranylgeranylation"/>
</dbReference>
<dbReference type="Reactome" id="R-MMU-8876198">
    <property type="pathway name" value="RAB GEFs exchange GTP for GDP on RABs"/>
</dbReference>
<dbReference type="Reactome" id="R-MMU-9706019">
    <property type="pathway name" value="RHOBTB3 ATPase cycle"/>
</dbReference>
<dbReference type="BioGRID-ORCS" id="56382">
    <property type="hits" value="5 hits in 79 CRISPR screens"/>
</dbReference>
<dbReference type="ChiTaRS" id="Rab9">
    <property type="organism name" value="mouse"/>
</dbReference>
<dbReference type="EvolutionaryTrace" id="Q9R0M6"/>
<dbReference type="PRO" id="PR:Q9R0M6"/>
<dbReference type="Proteomes" id="UP000000589">
    <property type="component" value="Chromosome X"/>
</dbReference>
<dbReference type="RNAct" id="Q9R0M6">
    <property type="molecule type" value="protein"/>
</dbReference>
<dbReference type="Bgee" id="ENSMUSG00000079316">
    <property type="expression patterns" value="Expressed in trigeminal ganglion and 246 other cell types or tissues"/>
</dbReference>
<dbReference type="ExpressionAtlas" id="Q9R0M6">
    <property type="expression patterns" value="baseline and differential"/>
</dbReference>
<dbReference type="GO" id="GO:0030659">
    <property type="term" value="C:cytoplasmic vesicle membrane"/>
    <property type="evidence" value="ECO:0000314"/>
    <property type="project" value="UniProtKB"/>
</dbReference>
<dbReference type="GO" id="GO:0005789">
    <property type="term" value="C:endoplasmic reticulum membrane"/>
    <property type="evidence" value="ECO:0007669"/>
    <property type="project" value="UniProtKB-SubCell"/>
</dbReference>
<dbReference type="GO" id="GO:0000139">
    <property type="term" value="C:Golgi membrane"/>
    <property type="evidence" value="ECO:0007669"/>
    <property type="project" value="UniProtKB-SubCell"/>
</dbReference>
<dbReference type="GO" id="GO:0005770">
    <property type="term" value="C:late endosome"/>
    <property type="evidence" value="ECO:0000266"/>
    <property type="project" value="MGI"/>
</dbReference>
<dbReference type="GO" id="GO:0005764">
    <property type="term" value="C:lysosome"/>
    <property type="evidence" value="ECO:0000266"/>
    <property type="project" value="MGI"/>
</dbReference>
<dbReference type="GO" id="GO:0042470">
    <property type="term" value="C:melanosome"/>
    <property type="evidence" value="ECO:0000314"/>
    <property type="project" value="UniProtKB"/>
</dbReference>
<dbReference type="GO" id="GO:0045335">
    <property type="term" value="C:phagocytic vesicle"/>
    <property type="evidence" value="ECO:0000250"/>
    <property type="project" value="UniProtKB"/>
</dbReference>
<dbReference type="GO" id="GO:0030670">
    <property type="term" value="C:phagocytic vesicle membrane"/>
    <property type="evidence" value="ECO:0007669"/>
    <property type="project" value="UniProtKB-SubCell"/>
</dbReference>
<dbReference type="GO" id="GO:0005886">
    <property type="term" value="C:plasma membrane"/>
    <property type="evidence" value="ECO:0007669"/>
    <property type="project" value="UniProtKB-SubCell"/>
</dbReference>
<dbReference type="GO" id="GO:0003925">
    <property type="term" value="F:G protein activity"/>
    <property type="evidence" value="ECO:0007669"/>
    <property type="project" value="Ensembl"/>
</dbReference>
<dbReference type="GO" id="GO:0019003">
    <property type="term" value="F:GDP binding"/>
    <property type="evidence" value="ECO:0000250"/>
    <property type="project" value="UniProtKB"/>
</dbReference>
<dbReference type="GO" id="GO:0005525">
    <property type="term" value="F:GTP binding"/>
    <property type="evidence" value="ECO:0000250"/>
    <property type="project" value="UniProtKB"/>
</dbReference>
<dbReference type="GO" id="GO:0003924">
    <property type="term" value="F:GTPase activity"/>
    <property type="evidence" value="ECO:0000250"/>
    <property type="project" value="UniProtKB"/>
</dbReference>
<dbReference type="GO" id="GO:0042802">
    <property type="term" value="F:identical protein binding"/>
    <property type="evidence" value="ECO:0000353"/>
    <property type="project" value="IntAct"/>
</dbReference>
<dbReference type="GO" id="GO:0045921">
    <property type="term" value="P:positive regulation of exocytosis"/>
    <property type="evidence" value="ECO:0007669"/>
    <property type="project" value="Ensembl"/>
</dbReference>
<dbReference type="GO" id="GO:0015031">
    <property type="term" value="P:protein transport"/>
    <property type="evidence" value="ECO:0007669"/>
    <property type="project" value="UniProtKB-KW"/>
</dbReference>
<dbReference type="GO" id="GO:0032482">
    <property type="term" value="P:Rab protein signal transduction"/>
    <property type="evidence" value="ECO:0007669"/>
    <property type="project" value="InterPro"/>
</dbReference>
<dbReference type="GO" id="GO:0006898">
    <property type="term" value="P:receptor-mediated endocytosis"/>
    <property type="evidence" value="ECO:0007669"/>
    <property type="project" value="Ensembl"/>
</dbReference>
<dbReference type="GO" id="GO:0032880">
    <property type="term" value="P:regulation of protein localization"/>
    <property type="evidence" value="ECO:0007669"/>
    <property type="project" value="Ensembl"/>
</dbReference>
<dbReference type="CDD" id="cd04116">
    <property type="entry name" value="Rab9"/>
    <property type="match status" value="1"/>
</dbReference>
<dbReference type="FunFam" id="3.40.50.300:FF:000360">
    <property type="entry name" value="RAB9B, member RAS oncogene family"/>
    <property type="match status" value="1"/>
</dbReference>
<dbReference type="Gene3D" id="3.40.50.300">
    <property type="entry name" value="P-loop containing nucleotide triphosphate hydrolases"/>
    <property type="match status" value="1"/>
</dbReference>
<dbReference type="InterPro" id="IPR027417">
    <property type="entry name" value="P-loop_NTPase"/>
</dbReference>
<dbReference type="InterPro" id="IPR041824">
    <property type="entry name" value="Rab9"/>
</dbReference>
<dbReference type="InterPro" id="IPR005225">
    <property type="entry name" value="Small_GTP-bd"/>
</dbReference>
<dbReference type="InterPro" id="IPR001806">
    <property type="entry name" value="Small_GTPase"/>
</dbReference>
<dbReference type="NCBIfam" id="TIGR00231">
    <property type="entry name" value="small_GTP"/>
    <property type="match status" value="1"/>
</dbReference>
<dbReference type="PANTHER" id="PTHR47981">
    <property type="entry name" value="RAB FAMILY"/>
    <property type="match status" value="1"/>
</dbReference>
<dbReference type="PANTHER" id="PTHR47981:SF9">
    <property type="entry name" value="RAS-RELATED PROTEIN RAB-9A"/>
    <property type="match status" value="1"/>
</dbReference>
<dbReference type="Pfam" id="PF00071">
    <property type="entry name" value="Ras"/>
    <property type="match status" value="1"/>
</dbReference>
<dbReference type="PRINTS" id="PR00449">
    <property type="entry name" value="RASTRNSFRMNG"/>
</dbReference>
<dbReference type="SMART" id="SM00175">
    <property type="entry name" value="RAB"/>
    <property type="match status" value="1"/>
</dbReference>
<dbReference type="SMART" id="SM00176">
    <property type="entry name" value="RAN"/>
    <property type="match status" value="1"/>
</dbReference>
<dbReference type="SMART" id="SM00173">
    <property type="entry name" value="RAS"/>
    <property type="match status" value="1"/>
</dbReference>
<dbReference type="SMART" id="SM00174">
    <property type="entry name" value="RHO"/>
    <property type="match status" value="1"/>
</dbReference>
<dbReference type="SUPFAM" id="SSF52540">
    <property type="entry name" value="P-loop containing nucleoside triphosphate hydrolases"/>
    <property type="match status" value="1"/>
</dbReference>
<dbReference type="PROSITE" id="PS51419">
    <property type="entry name" value="RAB"/>
    <property type="match status" value="1"/>
</dbReference>
<reference key="1">
    <citation type="submission" date="1999-05" db="EMBL/GenBank/DDBJ databases">
        <title>Mouse small GTP binding protein.</title>
        <authorList>
            <person name="Seki N."/>
            <person name="Hattori A."/>
            <person name="Hayashi A."/>
            <person name="Kozuma S."/>
            <person name="Muramatsu M."/>
            <person name="Saito T."/>
        </authorList>
    </citation>
    <scope>NUCLEOTIDE SEQUENCE [MRNA]</scope>
</reference>
<reference key="2">
    <citation type="journal article" date="2005" name="Science">
        <title>The transcriptional landscape of the mammalian genome.</title>
        <authorList>
            <person name="Carninci P."/>
            <person name="Kasukawa T."/>
            <person name="Katayama S."/>
            <person name="Gough J."/>
            <person name="Frith M.C."/>
            <person name="Maeda N."/>
            <person name="Oyama R."/>
            <person name="Ravasi T."/>
            <person name="Lenhard B."/>
            <person name="Wells C."/>
            <person name="Kodzius R."/>
            <person name="Shimokawa K."/>
            <person name="Bajic V.B."/>
            <person name="Brenner S.E."/>
            <person name="Batalov S."/>
            <person name="Forrest A.R."/>
            <person name="Zavolan M."/>
            <person name="Davis M.J."/>
            <person name="Wilming L.G."/>
            <person name="Aidinis V."/>
            <person name="Allen J.E."/>
            <person name="Ambesi-Impiombato A."/>
            <person name="Apweiler R."/>
            <person name="Aturaliya R.N."/>
            <person name="Bailey T.L."/>
            <person name="Bansal M."/>
            <person name="Baxter L."/>
            <person name="Beisel K.W."/>
            <person name="Bersano T."/>
            <person name="Bono H."/>
            <person name="Chalk A.M."/>
            <person name="Chiu K.P."/>
            <person name="Choudhary V."/>
            <person name="Christoffels A."/>
            <person name="Clutterbuck D.R."/>
            <person name="Crowe M.L."/>
            <person name="Dalla E."/>
            <person name="Dalrymple B.P."/>
            <person name="de Bono B."/>
            <person name="Della Gatta G."/>
            <person name="di Bernardo D."/>
            <person name="Down T."/>
            <person name="Engstrom P."/>
            <person name="Fagiolini M."/>
            <person name="Faulkner G."/>
            <person name="Fletcher C.F."/>
            <person name="Fukushima T."/>
            <person name="Furuno M."/>
            <person name="Futaki S."/>
            <person name="Gariboldi M."/>
            <person name="Georgii-Hemming P."/>
            <person name="Gingeras T.R."/>
            <person name="Gojobori T."/>
            <person name="Green R.E."/>
            <person name="Gustincich S."/>
            <person name="Harbers M."/>
            <person name="Hayashi Y."/>
            <person name="Hensch T.K."/>
            <person name="Hirokawa N."/>
            <person name="Hill D."/>
            <person name="Huminiecki L."/>
            <person name="Iacono M."/>
            <person name="Ikeo K."/>
            <person name="Iwama A."/>
            <person name="Ishikawa T."/>
            <person name="Jakt M."/>
            <person name="Kanapin A."/>
            <person name="Katoh M."/>
            <person name="Kawasawa Y."/>
            <person name="Kelso J."/>
            <person name="Kitamura H."/>
            <person name="Kitano H."/>
            <person name="Kollias G."/>
            <person name="Krishnan S.P."/>
            <person name="Kruger A."/>
            <person name="Kummerfeld S.K."/>
            <person name="Kurochkin I.V."/>
            <person name="Lareau L.F."/>
            <person name="Lazarevic D."/>
            <person name="Lipovich L."/>
            <person name="Liu J."/>
            <person name="Liuni S."/>
            <person name="McWilliam S."/>
            <person name="Madan Babu M."/>
            <person name="Madera M."/>
            <person name="Marchionni L."/>
            <person name="Matsuda H."/>
            <person name="Matsuzawa S."/>
            <person name="Miki H."/>
            <person name="Mignone F."/>
            <person name="Miyake S."/>
            <person name="Morris K."/>
            <person name="Mottagui-Tabar S."/>
            <person name="Mulder N."/>
            <person name="Nakano N."/>
            <person name="Nakauchi H."/>
            <person name="Ng P."/>
            <person name="Nilsson R."/>
            <person name="Nishiguchi S."/>
            <person name="Nishikawa S."/>
            <person name="Nori F."/>
            <person name="Ohara O."/>
            <person name="Okazaki Y."/>
            <person name="Orlando V."/>
            <person name="Pang K.C."/>
            <person name="Pavan W.J."/>
            <person name="Pavesi G."/>
            <person name="Pesole G."/>
            <person name="Petrovsky N."/>
            <person name="Piazza S."/>
            <person name="Reed J."/>
            <person name="Reid J.F."/>
            <person name="Ring B.Z."/>
            <person name="Ringwald M."/>
            <person name="Rost B."/>
            <person name="Ruan Y."/>
            <person name="Salzberg S.L."/>
            <person name="Sandelin A."/>
            <person name="Schneider C."/>
            <person name="Schoenbach C."/>
            <person name="Sekiguchi K."/>
            <person name="Semple C.A."/>
            <person name="Seno S."/>
            <person name="Sessa L."/>
            <person name="Sheng Y."/>
            <person name="Shibata Y."/>
            <person name="Shimada H."/>
            <person name="Shimada K."/>
            <person name="Silva D."/>
            <person name="Sinclair B."/>
            <person name="Sperling S."/>
            <person name="Stupka E."/>
            <person name="Sugiura K."/>
            <person name="Sultana R."/>
            <person name="Takenaka Y."/>
            <person name="Taki K."/>
            <person name="Tammoja K."/>
            <person name="Tan S.L."/>
            <person name="Tang S."/>
            <person name="Taylor M.S."/>
            <person name="Tegner J."/>
            <person name="Teichmann S.A."/>
            <person name="Ueda H.R."/>
            <person name="van Nimwegen E."/>
            <person name="Verardo R."/>
            <person name="Wei C.L."/>
            <person name="Yagi K."/>
            <person name="Yamanishi H."/>
            <person name="Zabarovsky E."/>
            <person name="Zhu S."/>
            <person name="Zimmer A."/>
            <person name="Hide W."/>
            <person name="Bult C."/>
            <person name="Grimmond S.M."/>
            <person name="Teasdale R.D."/>
            <person name="Liu E.T."/>
            <person name="Brusic V."/>
            <person name="Quackenbush J."/>
            <person name="Wahlestedt C."/>
            <person name="Mattick J.S."/>
            <person name="Hume D.A."/>
            <person name="Kai C."/>
            <person name="Sasaki D."/>
            <person name="Tomaru Y."/>
            <person name="Fukuda S."/>
            <person name="Kanamori-Katayama M."/>
            <person name="Suzuki M."/>
            <person name="Aoki J."/>
            <person name="Arakawa T."/>
            <person name="Iida J."/>
            <person name="Imamura K."/>
            <person name="Itoh M."/>
            <person name="Kato T."/>
            <person name="Kawaji H."/>
            <person name="Kawagashira N."/>
            <person name="Kawashima T."/>
            <person name="Kojima M."/>
            <person name="Kondo S."/>
            <person name="Konno H."/>
            <person name="Nakano K."/>
            <person name="Ninomiya N."/>
            <person name="Nishio T."/>
            <person name="Okada M."/>
            <person name="Plessy C."/>
            <person name="Shibata K."/>
            <person name="Shiraki T."/>
            <person name="Suzuki S."/>
            <person name="Tagami M."/>
            <person name="Waki K."/>
            <person name="Watahiki A."/>
            <person name="Okamura-Oho Y."/>
            <person name="Suzuki H."/>
            <person name="Kawai J."/>
            <person name="Hayashizaki Y."/>
        </authorList>
    </citation>
    <scope>NUCLEOTIDE SEQUENCE [LARGE SCALE MRNA]</scope>
    <source>
        <strain>C57BL/6J</strain>
        <tissue>Embryonic stem cell</tissue>
        <tissue>Head</tissue>
        <tissue>Olfactory bulb</tissue>
    </source>
</reference>
<reference key="3">
    <citation type="journal article" date="2004" name="Genome Res.">
        <title>The status, quality, and expansion of the NIH full-length cDNA project: the Mammalian Gene Collection (MGC).</title>
        <authorList>
            <consortium name="The MGC Project Team"/>
        </authorList>
    </citation>
    <scope>NUCLEOTIDE SEQUENCE [LARGE SCALE MRNA]</scope>
    <source>
        <strain>FVB/N</strain>
        <tissue>Mammary gland</tissue>
    </source>
</reference>
<reference key="4">
    <citation type="journal article" date="2010" name="Cell">
        <title>A tissue-specific atlas of mouse protein phosphorylation and expression.</title>
        <authorList>
            <person name="Huttlin E.L."/>
            <person name="Jedrychowski M.P."/>
            <person name="Elias J.E."/>
            <person name="Goswami T."/>
            <person name="Rad R."/>
            <person name="Beausoleil S.A."/>
            <person name="Villen J."/>
            <person name="Haas W."/>
            <person name="Sowa M.E."/>
            <person name="Gygi S.P."/>
        </authorList>
    </citation>
    <scope>PHOSPHORYLATION [LARGE SCALE ANALYSIS] AT SER-34</scope>
    <scope>IDENTIFICATION BY MASS SPECTROMETRY [LARGE SCALE ANALYSIS]</scope>
    <source>
        <tissue>Brain</tissue>
        <tissue>Brown adipose tissue</tissue>
        <tissue>Heart</tissue>
        <tissue>Kidney</tissue>
        <tissue>Liver</tissue>
        <tissue>Lung</tissue>
        <tissue>Spleen</tissue>
        <tissue>Testis</tissue>
    </source>
</reference>
<reference key="5">
    <citation type="journal article" date="2010" name="J. Biol. Chem.">
        <title>Assembly of the biogenesis of lysosome-related organelles complex-3 (BLOC-3) and its interaction with Rab9.</title>
        <authorList>
            <person name="Kloer D.P."/>
            <person name="Rojas R."/>
            <person name="Ivan V."/>
            <person name="Moriyama K."/>
            <person name="van Vlijmen T."/>
            <person name="Murthy N."/>
            <person name="Ghirlando R."/>
            <person name="van der Sluijs P."/>
            <person name="Hurley J.H."/>
            <person name="Bonifacino J.S."/>
        </authorList>
    </citation>
    <scope>INTERACTION WITH HPS4</scope>
</reference>
<reference key="6">
    <citation type="journal article" date="2016" name="J. Biol. Chem.">
        <title>RUTBC1 functions as a GTPase-activating protein for Rab32/38 and regulates melanogenic enzyme trafficking in melanocytes.</title>
        <authorList>
            <person name="Marubashi S."/>
            <person name="Shimada H."/>
            <person name="Fukuda M."/>
            <person name="Ohbayashi N."/>
        </authorList>
    </citation>
    <scope>FUNCTION</scope>
    <scope>INTERACTION WITH SGSM2 AND HPS4</scope>
    <scope>SUBCELLULAR LOCATION</scope>
</reference>
<reference key="7">
    <citation type="journal article" date="2014" name="Structure">
        <title>Crystal structure of the Rab9A-RUTBC2 RBD complex reveals the molecular basis for the binding specificity of Rab9A with RUTBC2.</title>
        <authorList>
            <person name="Zhang Z."/>
            <person name="Wang S."/>
            <person name="Shen T."/>
            <person name="Chen J."/>
            <person name="Ding J."/>
        </authorList>
    </citation>
    <scope>X-RAY CRYSTALLOGRAPHY (2.30 ANGSTROMS) OF 1-199 IN COMPLEX WITH GTP; MG(2+) AND SGSM1</scope>
    <scope>SUBCELLULAR LOCATION</scope>
    <scope>COFACTOR</scope>
</reference>
<name>RAB9A_MOUSE</name>
<keyword id="KW-0002">3D-structure</keyword>
<keyword id="KW-0007">Acetylation</keyword>
<keyword id="KW-1003">Cell membrane</keyword>
<keyword id="KW-0968">Cytoplasmic vesicle</keyword>
<keyword id="KW-0256">Endoplasmic reticulum</keyword>
<keyword id="KW-0967">Endosome</keyword>
<keyword id="KW-0333">Golgi apparatus</keyword>
<keyword id="KW-0342">GTP-binding</keyword>
<keyword id="KW-0378">Hydrolase</keyword>
<keyword id="KW-0449">Lipoprotein</keyword>
<keyword id="KW-0460">Magnesium</keyword>
<keyword id="KW-0472">Membrane</keyword>
<keyword id="KW-0479">Metal-binding</keyword>
<keyword id="KW-0547">Nucleotide-binding</keyword>
<keyword id="KW-0597">Phosphoprotein</keyword>
<keyword id="KW-0636">Prenylation</keyword>
<keyword id="KW-0653">Protein transport</keyword>
<keyword id="KW-1185">Reference proteome</keyword>
<keyword id="KW-0813">Transport</keyword>
<organism>
    <name type="scientific">Mus musculus</name>
    <name type="common">Mouse</name>
    <dbReference type="NCBI Taxonomy" id="10090"/>
    <lineage>
        <taxon>Eukaryota</taxon>
        <taxon>Metazoa</taxon>
        <taxon>Chordata</taxon>
        <taxon>Craniata</taxon>
        <taxon>Vertebrata</taxon>
        <taxon>Euteleostomi</taxon>
        <taxon>Mammalia</taxon>
        <taxon>Eutheria</taxon>
        <taxon>Euarchontoglires</taxon>
        <taxon>Glires</taxon>
        <taxon>Rodentia</taxon>
        <taxon>Myomorpha</taxon>
        <taxon>Muroidea</taxon>
        <taxon>Muridae</taxon>
        <taxon>Murinae</taxon>
        <taxon>Mus</taxon>
        <taxon>Mus</taxon>
    </lineage>
</organism>
<comment type="function">
    <text evidence="2 3 6">The small GTPases Rab are key regulators of intracellular membrane trafficking, from the formation of transport vesicles to their fusion with membranes. Rabs cycle between an inactive GDP-bound form and an active GTP-bound form that is able to recruit to membranes different sets of downstream effectors directly responsible for vesicle formation, movement, tethering and fusion (By similarity). RAB9A is involved in the transport of proteins between the endosomes and the trans-Golgi network (TGN). Specifically uses NDE1/NDEL1 as an effector to interact with the dynein motor complex in order to control retrograde trafficking of RAB9-associated late endosomes to the TGN (By similarity). Involved in the recruitment of SGSM2 to melanosomes and is required for the proper trafficking of melanogenic enzymes TYR, TYRP1 and DCT/TYRP2 to melanosomes in melanocytes (PubMed:26620560).</text>
</comment>
<comment type="catalytic activity">
    <reaction evidence="3">
        <text>GTP + H2O = GDP + phosphate + H(+)</text>
        <dbReference type="Rhea" id="RHEA:19669"/>
        <dbReference type="ChEBI" id="CHEBI:15377"/>
        <dbReference type="ChEBI" id="CHEBI:15378"/>
        <dbReference type="ChEBI" id="CHEBI:37565"/>
        <dbReference type="ChEBI" id="CHEBI:43474"/>
        <dbReference type="ChEBI" id="CHEBI:58189"/>
        <dbReference type="EC" id="3.6.5.2"/>
    </reaction>
    <physiologicalReaction direction="left-to-right" evidence="3">
        <dbReference type="Rhea" id="RHEA:19670"/>
    </physiologicalReaction>
</comment>
<comment type="cofactor">
    <cofactor evidence="5">
        <name>Mg(2+)</name>
        <dbReference type="ChEBI" id="CHEBI:18420"/>
    </cofactor>
</comment>
<comment type="activity regulation">
    <text evidence="2">Regulated by guanine nucleotide exchange factors (GEFs) which promote the exchange of bound GDP for free GTP. Regulated by GTPase activating proteins (GAPs) which increase the GTP hydrolysis activity. Inhibited by GDP dissociation inhibitors (GDIs).</text>
</comment>
<comment type="subunit">
    <text evidence="2 4 5 6">Interacts (preferentially in its GTP-bound form) with GCC2 (via its GRIP domain) (By similarity). Interacts (GTP-bound form) with SGSM1; the GDP-bound form has much lower affinity for SGSM1 (PubMed:25220469). Interacts with SGSM2 (PubMed:26620560). The GTP-bound form but not the GDP-bound form interacts with HPS4 (PubMed:20048159, PubMed:26620560). The GTP-bound form but not the GDP-bound form interacts with BLOC-3 complex (heterodimer of HPS1 and HPS4) but does not interact with HPS1 alone (By similarity). Interacts (GTP-bound form) with NDE1; two RAB9A-GTP molecules lie on the opposite sides of the NDE1 homodimer; the interaction leads to RAB9A-dynein motor tethering. Interacts (GTP-bound form) with NDEL1 (By similarity).</text>
</comment>
<comment type="interaction">
    <interactant intactId="EBI-6552247">
        <id>Q9R0M6</id>
    </interactant>
    <interactant intactId="EBI-6552247">
        <id>Q9R0M6</id>
        <label>Rab9a</label>
    </interactant>
    <organismsDiffer>false</organismsDiffer>
    <experiments>2</experiments>
</comment>
<comment type="interaction">
    <interactant intactId="EBI-6552247">
        <id>Q9R0M6</id>
    </interactant>
    <interactant intactId="EBI-16121756">
        <id>Q8BPQ7-1</id>
        <label>Sgsm1</label>
    </interactant>
    <organismsDiffer>false</organismsDiffer>
    <experiments>8</experiments>
</comment>
<comment type="subcellular location">
    <subcellularLocation>
        <location evidence="2">Cell membrane</location>
        <topology evidence="2">Lipid-anchor</topology>
        <orientation evidence="2">Cytoplasmic side</orientation>
    </subcellularLocation>
    <subcellularLocation>
        <location evidence="2">Endoplasmic reticulum membrane</location>
    </subcellularLocation>
    <subcellularLocation>
        <location evidence="2">Golgi apparatus membrane</location>
    </subcellularLocation>
    <subcellularLocation>
        <location evidence="2">Late endosome</location>
    </subcellularLocation>
    <subcellularLocation>
        <location evidence="2">Cytoplasmic vesicle</location>
        <location evidence="2">Phagosome membrane</location>
        <topology evidence="2">Lipid-anchor</topology>
        <orientation evidence="2">Cytoplasmic side</orientation>
    </subcellularLocation>
    <subcellularLocation>
        <location evidence="2">Cytoplasmic vesicle</location>
        <location evidence="2">Phagosome</location>
    </subcellularLocation>
    <subcellularLocation>
        <location evidence="2">Cytoplasmic vesicle membrane</location>
    </subcellularLocation>
    <subcellularLocation>
        <location evidence="6">Melanosome</location>
    </subcellularLocation>
    <text evidence="2">Colocalizes with OSBPL1A at the late endosome. Recruited to phagosomes containing S.aureus or M.tuberculosis. Mainly localizes to late endosomes and partially localizes to Golgi. Colocalizes with NDE1 to membrane vesicles.</text>
</comment>
<comment type="similarity">
    <text evidence="7">Belongs to the small GTPase superfamily. Rab family.</text>
</comment>
<proteinExistence type="evidence at protein level"/>